<organism>
    <name type="scientific">Trieres chinensis</name>
    <name type="common">Marine centric diatom</name>
    <name type="synonym">Odontella sinensis</name>
    <dbReference type="NCBI Taxonomy" id="1514140"/>
    <lineage>
        <taxon>Eukaryota</taxon>
        <taxon>Sar</taxon>
        <taxon>Stramenopiles</taxon>
        <taxon>Ochrophyta</taxon>
        <taxon>Bacillariophyta</taxon>
        <taxon>Mediophyceae</taxon>
        <taxon>Biddulphiophycidae</taxon>
        <taxon>Eupodiscales</taxon>
        <taxon>Parodontellaceae</taxon>
        <taxon>Trieres</taxon>
    </lineage>
</organism>
<name>PSAC_TRICV</name>
<proteinExistence type="inferred from homology"/>
<sequence>MSHTVKIYDTCIGCTQCVRACPTDVLEMVPWDGCKSGQIASSPRVEDCVGCKRCETACPTDFLSVRVYLGRLETTRSLGLAY</sequence>
<gene>
    <name evidence="2" type="primary">psaC</name>
</gene>
<dbReference type="EC" id="1.97.1.12" evidence="2"/>
<dbReference type="EMBL" id="Z67753">
    <property type="protein sequence ID" value="CAA91614.1"/>
    <property type="molecule type" value="Genomic_DNA"/>
</dbReference>
<dbReference type="PIR" id="S78241">
    <property type="entry name" value="S78241"/>
</dbReference>
<dbReference type="RefSeq" id="NP_043582.1">
    <property type="nucleotide sequence ID" value="NC_001713.1"/>
</dbReference>
<dbReference type="SMR" id="P49477"/>
<dbReference type="GeneID" id="801708"/>
<dbReference type="GO" id="GO:0009535">
    <property type="term" value="C:chloroplast thylakoid membrane"/>
    <property type="evidence" value="ECO:0007669"/>
    <property type="project" value="UniProtKB-SubCell"/>
</dbReference>
<dbReference type="GO" id="GO:0009522">
    <property type="term" value="C:photosystem I"/>
    <property type="evidence" value="ECO:0007669"/>
    <property type="project" value="UniProtKB-KW"/>
</dbReference>
<dbReference type="GO" id="GO:0051539">
    <property type="term" value="F:4 iron, 4 sulfur cluster binding"/>
    <property type="evidence" value="ECO:0007669"/>
    <property type="project" value="UniProtKB-KW"/>
</dbReference>
<dbReference type="GO" id="GO:0009055">
    <property type="term" value="F:electron transfer activity"/>
    <property type="evidence" value="ECO:0007669"/>
    <property type="project" value="UniProtKB-UniRule"/>
</dbReference>
<dbReference type="GO" id="GO:0046872">
    <property type="term" value="F:metal ion binding"/>
    <property type="evidence" value="ECO:0007669"/>
    <property type="project" value="UniProtKB-KW"/>
</dbReference>
<dbReference type="GO" id="GO:0016491">
    <property type="term" value="F:oxidoreductase activity"/>
    <property type="evidence" value="ECO:0007669"/>
    <property type="project" value="UniProtKB-KW"/>
</dbReference>
<dbReference type="GO" id="GO:0009773">
    <property type="term" value="P:photosynthetic electron transport in photosystem I"/>
    <property type="evidence" value="ECO:0007669"/>
    <property type="project" value="InterPro"/>
</dbReference>
<dbReference type="FunFam" id="3.30.70.20:FF:000001">
    <property type="entry name" value="Photosystem I iron-sulfur center"/>
    <property type="match status" value="1"/>
</dbReference>
<dbReference type="Gene3D" id="3.30.70.20">
    <property type="match status" value="1"/>
</dbReference>
<dbReference type="HAMAP" id="MF_01303">
    <property type="entry name" value="PSI_PsaC"/>
    <property type="match status" value="1"/>
</dbReference>
<dbReference type="InterPro" id="IPR017896">
    <property type="entry name" value="4Fe4S_Fe-S-bd"/>
</dbReference>
<dbReference type="InterPro" id="IPR017900">
    <property type="entry name" value="4Fe4S_Fe_S_CS"/>
</dbReference>
<dbReference type="InterPro" id="IPR050157">
    <property type="entry name" value="PSI_iron-sulfur_center"/>
</dbReference>
<dbReference type="InterPro" id="IPR017491">
    <property type="entry name" value="PSI_PsaC"/>
</dbReference>
<dbReference type="NCBIfam" id="TIGR03048">
    <property type="entry name" value="PS_I_psaC"/>
    <property type="match status" value="1"/>
</dbReference>
<dbReference type="PANTHER" id="PTHR24960:SF79">
    <property type="entry name" value="PHOTOSYSTEM I IRON-SULFUR CENTER"/>
    <property type="match status" value="1"/>
</dbReference>
<dbReference type="PANTHER" id="PTHR24960">
    <property type="entry name" value="PHOTOSYSTEM I IRON-SULFUR CENTER-RELATED"/>
    <property type="match status" value="1"/>
</dbReference>
<dbReference type="Pfam" id="PF12838">
    <property type="entry name" value="Fer4_7"/>
    <property type="match status" value="1"/>
</dbReference>
<dbReference type="SUPFAM" id="SSF54862">
    <property type="entry name" value="4Fe-4S ferredoxins"/>
    <property type="match status" value="1"/>
</dbReference>
<dbReference type="PROSITE" id="PS00198">
    <property type="entry name" value="4FE4S_FER_1"/>
    <property type="match status" value="2"/>
</dbReference>
<dbReference type="PROSITE" id="PS51379">
    <property type="entry name" value="4FE4S_FER_2"/>
    <property type="match status" value="2"/>
</dbReference>
<accession>P49477</accession>
<keyword id="KW-0004">4Fe-4S</keyword>
<keyword id="KW-0150">Chloroplast</keyword>
<keyword id="KW-0249">Electron transport</keyword>
<keyword id="KW-0408">Iron</keyword>
<keyword id="KW-0411">Iron-sulfur</keyword>
<keyword id="KW-0472">Membrane</keyword>
<keyword id="KW-0479">Metal-binding</keyword>
<keyword id="KW-0560">Oxidoreductase</keyword>
<keyword id="KW-0602">Photosynthesis</keyword>
<keyword id="KW-0603">Photosystem I</keyword>
<keyword id="KW-0934">Plastid</keyword>
<keyword id="KW-0677">Repeat</keyword>
<keyword id="KW-0793">Thylakoid</keyword>
<keyword id="KW-0813">Transport</keyword>
<feature type="initiator methionine" description="Removed" evidence="1">
    <location>
        <position position="1"/>
    </location>
</feature>
<feature type="chain" id="PRO_0000061992" description="Photosystem I iron-sulfur center">
    <location>
        <begin position="2"/>
        <end position="82"/>
    </location>
</feature>
<feature type="domain" description="4Fe-4S ferredoxin-type 1" evidence="2">
    <location>
        <begin position="2"/>
        <end position="31"/>
    </location>
</feature>
<feature type="domain" description="4Fe-4S ferredoxin-type 2" evidence="2">
    <location>
        <begin position="37"/>
        <end position="68"/>
    </location>
</feature>
<feature type="binding site" evidence="2">
    <location>
        <position position="11"/>
    </location>
    <ligand>
        <name>[4Fe-4S] cluster</name>
        <dbReference type="ChEBI" id="CHEBI:49883"/>
        <label>1</label>
    </ligand>
</feature>
<feature type="binding site" evidence="2">
    <location>
        <position position="14"/>
    </location>
    <ligand>
        <name>[4Fe-4S] cluster</name>
        <dbReference type="ChEBI" id="CHEBI:49883"/>
        <label>1</label>
    </ligand>
</feature>
<feature type="binding site" evidence="2">
    <location>
        <position position="17"/>
    </location>
    <ligand>
        <name>[4Fe-4S] cluster</name>
        <dbReference type="ChEBI" id="CHEBI:49883"/>
        <label>1</label>
    </ligand>
</feature>
<feature type="binding site" evidence="2">
    <location>
        <position position="21"/>
    </location>
    <ligand>
        <name>[4Fe-4S] cluster</name>
        <dbReference type="ChEBI" id="CHEBI:49883"/>
        <label>2</label>
    </ligand>
</feature>
<feature type="binding site" evidence="2">
    <location>
        <position position="48"/>
    </location>
    <ligand>
        <name>[4Fe-4S] cluster</name>
        <dbReference type="ChEBI" id="CHEBI:49883"/>
        <label>2</label>
    </ligand>
</feature>
<feature type="binding site" evidence="2">
    <location>
        <position position="51"/>
    </location>
    <ligand>
        <name>[4Fe-4S] cluster</name>
        <dbReference type="ChEBI" id="CHEBI:49883"/>
        <label>2</label>
    </ligand>
</feature>
<feature type="binding site" evidence="2">
    <location>
        <position position="54"/>
    </location>
    <ligand>
        <name>[4Fe-4S] cluster</name>
        <dbReference type="ChEBI" id="CHEBI:49883"/>
        <label>2</label>
    </ligand>
</feature>
<feature type="binding site" evidence="2">
    <location>
        <position position="58"/>
    </location>
    <ligand>
        <name>[4Fe-4S] cluster</name>
        <dbReference type="ChEBI" id="CHEBI:49883"/>
        <label>1</label>
    </ligand>
</feature>
<evidence type="ECO:0000250" key="1"/>
<evidence type="ECO:0000255" key="2">
    <source>
        <dbReference type="HAMAP-Rule" id="MF_01303"/>
    </source>
</evidence>
<comment type="function">
    <text>Apoprotein for the two 4Fe-4S centers FA and FB of photosystem I (PSI); essential for photochemical activity. FB is the terminal electron acceptor of PSI, donating electrons to ferredoxin. The C-terminus interacts with PsaA/B/D and helps assemble the protein into the PSI complex. Required for binding of PsaD and PsaE to PSI. PSI is a plastocyanin/cytochrome c6-ferredoxin oxidoreductase, converting photonic excitation into a charge separation, which transfers an electron from the donor P700 chlorophyll pair to the spectroscopically characterized acceptors A0, A1, FX, FA and FB in turn.</text>
</comment>
<comment type="catalytic activity">
    <reaction evidence="2">
        <text>reduced [plastocyanin] + hnu + oxidized [2Fe-2S]-[ferredoxin] = oxidized [plastocyanin] + reduced [2Fe-2S]-[ferredoxin]</text>
        <dbReference type="Rhea" id="RHEA:30407"/>
        <dbReference type="Rhea" id="RHEA-COMP:10000"/>
        <dbReference type="Rhea" id="RHEA-COMP:10001"/>
        <dbReference type="Rhea" id="RHEA-COMP:10039"/>
        <dbReference type="Rhea" id="RHEA-COMP:10040"/>
        <dbReference type="ChEBI" id="CHEBI:29036"/>
        <dbReference type="ChEBI" id="CHEBI:30212"/>
        <dbReference type="ChEBI" id="CHEBI:33737"/>
        <dbReference type="ChEBI" id="CHEBI:33738"/>
        <dbReference type="ChEBI" id="CHEBI:49552"/>
        <dbReference type="EC" id="1.97.1.12"/>
    </reaction>
</comment>
<comment type="cofactor">
    <cofactor evidence="2">
        <name>[4Fe-4S] cluster</name>
        <dbReference type="ChEBI" id="CHEBI:49883"/>
    </cofactor>
    <text evidence="2">Binds 2 [4Fe-4S] clusters. Cluster 2 is most probably the spectroscopically characterized electron acceptor FA and cluster 1 is most probably FB.</text>
</comment>
<comment type="subunit">
    <text evidence="2">The eukaryotic PSI reaction center is composed of at least 11 subunits.</text>
</comment>
<comment type="subcellular location">
    <subcellularLocation>
        <location evidence="2">Plastid</location>
        <location evidence="2">Chloroplast thylakoid membrane</location>
        <topology evidence="2">Peripheral membrane protein</topology>
        <orientation evidence="2">Stromal side</orientation>
    </subcellularLocation>
</comment>
<reference key="1">
    <citation type="journal article" date="1995" name="Plant Mol. Biol. Rep.">
        <title>The chloroplast genome of a chlorophyll a+c-containing alga, Odontella sinensis.</title>
        <authorList>
            <person name="Kowallik K.V."/>
            <person name="Stoebe B."/>
            <person name="Schaffran I."/>
            <person name="Kroth-Pancic P."/>
            <person name="Freier U."/>
        </authorList>
    </citation>
    <scope>NUCLEOTIDE SEQUENCE [LARGE SCALE GENOMIC DNA]</scope>
</reference>
<protein>
    <recommendedName>
        <fullName evidence="2">Photosystem I iron-sulfur center</fullName>
        <ecNumber evidence="2">1.97.1.12</ecNumber>
    </recommendedName>
    <alternativeName>
        <fullName evidence="2">9 kDa polypeptide</fullName>
    </alternativeName>
    <alternativeName>
        <fullName evidence="2">PSI-C</fullName>
    </alternativeName>
    <alternativeName>
        <fullName evidence="2">Photosystem I subunit VII</fullName>
    </alternativeName>
    <alternativeName>
        <fullName evidence="2">PsaC</fullName>
    </alternativeName>
</protein>
<geneLocation type="chloroplast"/>